<gene>
    <name evidence="1" type="primary">smpB</name>
    <name type="ordered locus">lpp2898</name>
</gene>
<organism>
    <name type="scientific">Legionella pneumophila (strain Paris)</name>
    <dbReference type="NCBI Taxonomy" id="297246"/>
    <lineage>
        <taxon>Bacteria</taxon>
        <taxon>Pseudomonadati</taxon>
        <taxon>Pseudomonadota</taxon>
        <taxon>Gammaproteobacteria</taxon>
        <taxon>Legionellales</taxon>
        <taxon>Legionellaceae</taxon>
        <taxon>Legionella</taxon>
    </lineage>
</organism>
<reference key="1">
    <citation type="journal article" date="2004" name="Nat. Genet.">
        <title>Evidence in the Legionella pneumophila genome for exploitation of host cell functions and high genome plasticity.</title>
        <authorList>
            <person name="Cazalet C."/>
            <person name="Rusniok C."/>
            <person name="Brueggemann H."/>
            <person name="Zidane N."/>
            <person name="Magnier A."/>
            <person name="Ma L."/>
            <person name="Tichit M."/>
            <person name="Jarraud S."/>
            <person name="Bouchier C."/>
            <person name="Vandenesch F."/>
            <person name="Kunst F."/>
            <person name="Etienne J."/>
            <person name="Glaser P."/>
            <person name="Buchrieser C."/>
        </authorList>
    </citation>
    <scope>NUCLEOTIDE SEQUENCE [LARGE SCALE GENOMIC DNA]</scope>
    <source>
        <strain>Paris</strain>
    </source>
</reference>
<sequence>MTTKKQPDSTIALNRKAGFDYFIEDQYEAGLVLEGWEVKSLRAGKINLSDSHVIIKYGEAFLLGAQIQPLPTASTHFIPDPVRTRKLLMNKKELNHLIGSVERQGYTIVPLSLYWKKNKIKIKIALAKGKKEHDKRDTIKDREWQRDRSRIMKKNT</sequence>
<feature type="chain" id="PRO_0000102967" description="SsrA-binding protein">
    <location>
        <begin position="1"/>
        <end position="156"/>
    </location>
</feature>
<feature type="region of interest" description="Disordered" evidence="2">
    <location>
        <begin position="135"/>
        <end position="156"/>
    </location>
</feature>
<feature type="compositionally biased region" description="Basic and acidic residues" evidence="2">
    <location>
        <begin position="135"/>
        <end position="150"/>
    </location>
</feature>
<name>SSRP_LEGPA</name>
<evidence type="ECO:0000255" key="1">
    <source>
        <dbReference type="HAMAP-Rule" id="MF_00023"/>
    </source>
</evidence>
<evidence type="ECO:0000256" key="2">
    <source>
        <dbReference type="SAM" id="MobiDB-lite"/>
    </source>
</evidence>
<proteinExistence type="inferred from homology"/>
<comment type="function">
    <text evidence="1">Required for rescue of stalled ribosomes mediated by trans-translation. Binds to transfer-messenger RNA (tmRNA), required for stable association of tmRNA with ribosomes. tmRNA and SmpB together mimic tRNA shape, replacing the anticodon stem-loop with SmpB. tmRNA is encoded by the ssrA gene; the 2 termini fold to resemble tRNA(Ala) and it encodes a 'tag peptide', a short internal open reading frame. During trans-translation Ala-aminoacylated tmRNA acts like a tRNA, entering the A-site of stalled ribosomes, displacing the stalled mRNA. The ribosome then switches to translate the ORF on the tmRNA; the nascent peptide is terminated with the 'tag peptide' encoded by the tmRNA and targeted for degradation. The ribosome is freed to recommence translation, which seems to be the essential function of trans-translation.</text>
</comment>
<comment type="subcellular location">
    <subcellularLocation>
        <location evidence="1">Cytoplasm</location>
    </subcellularLocation>
    <text evidence="1">The tmRNA-SmpB complex associates with stalled 70S ribosomes.</text>
</comment>
<comment type="similarity">
    <text evidence="1">Belongs to the SmpB family.</text>
</comment>
<keyword id="KW-0963">Cytoplasm</keyword>
<keyword id="KW-0694">RNA-binding</keyword>
<accession>Q5X148</accession>
<dbReference type="EMBL" id="CR628336">
    <property type="protein sequence ID" value="CAH14051.1"/>
    <property type="molecule type" value="Genomic_DNA"/>
</dbReference>
<dbReference type="RefSeq" id="WP_011216674.1">
    <property type="nucleotide sequence ID" value="NC_006368.1"/>
</dbReference>
<dbReference type="SMR" id="Q5X148"/>
<dbReference type="KEGG" id="lpp:lpp2898"/>
<dbReference type="LegioList" id="lpp2898"/>
<dbReference type="HOGENOM" id="CLU_108953_3_0_6"/>
<dbReference type="GO" id="GO:0005829">
    <property type="term" value="C:cytosol"/>
    <property type="evidence" value="ECO:0007669"/>
    <property type="project" value="TreeGrafter"/>
</dbReference>
<dbReference type="GO" id="GO:0003723">
    <property type="term" value="F:RNA binding"/>
    <property type="evidence" value="ECO:0007669"/>
    <property type="project" value="UniProtKB-UniRule"/>
</dbReference>
<dbReference type="GO" id="GO:0070929">
    <property type="term" value="P:trans-translation"/>
    <property type="evidence" value="ECO:0007669"/>
    <property type="project" value="UniProtKB-UniRule"/>
</dbReference>
<dbReference type="CDD" id="cd09294">
    <property type="entry name" value="SmpB"/>
    <property type="match status" value="1"/>
</dbReference>
<dbReference type="Gene3D" id="2.40.280.10">
    <property type="match status" value="1"/>
</dbReference>
<dbReference type="HAMAP" id="MF_00023">
    <property type="entry name" value="SmpB"/>
    <property type="match status" value="1"/>
</dbReference>
<dbReference type="InterPro" id="IPR023620">
    <property type="entry name" value="SmpB"/>
</dbReference>
<dbReference type="InterPro" id="IPR000037">
    <property type="entry name" value="SsrA-bd_prot"/>
</dbReference>
<dbReference type="InterPro" id="IPR020081">
    <property type="entry name" value="SsrA-bd_prot_CS"/>
</dbReference>
<dbReference type="NCBIfam" id="NF003843">
    <property type="entry name" value="PRK05422.1"/>
    <property type="match status" value="1"/>
</dbReference>
<dbReference type="NCBIfam" id="TIGR00086">
    <property type="entry name" value="smpB"/>
    <property type="match status" value="1"/>
</dbReference>
<dbReference type="PANTHER" id="PTHR30308:SF2">
    <property type="entry name" value="SSRA-BINDING PROTEIN"/>
    <property type="match status" value="1"/>
</dbReference>
<dbReference type="PANTHER" id="PTHR30308">
    <property type="entry name" value="TMRNA-BINDING COMPONENT OF TRANS-TRANSLATION TAGGING COMPLEX"/>
    <property type="match status" value="1"/>
</dbReference>
<dbReference type="Pfam" id="PF01668">
    <property type="entry name" value="SmpB"/>
    <property type="match status" value="1"/>
</dbReference>
<dbReference type="SUPFAM" id="SSF74982">
    <property type="entry name" value="Small protein B (SmpB)"/>
    <property type="match status" value="1"/>
</dbReference>
<dbReference type="PROSITE" id="PS01317">
    <property type="entry name" value="SSRP"/>
    <property type="match status" value="1"/>
</dbReference>
<protein>
    <recommendedName>
        <fullName evidence="1">SsrA-binding protein</fullName>
    </recommendedName>
    <alternativeName>
        <fullName evidence="1">Small protein B</fullName>
    </alternativeName>
</protein>